<reference key="1">
    <citation type="journal article" date="2009" name="J. Bacteriol.">
        <title>Genome sequences of three Agrobacterium biovars help elucidate the evolution of multichromosome genomes in bacteria.</title>
        <authorList>
            <person name="Slater S.C."/>
            <person name="Goldman B.S."/>
            <person name="Goodner B."/>
            <person name="Setubal J.C."/>
            <person name="Farrand S.K."/>
            <person name="Nester E.W."/>
            <person name="Burr T.J."/>
            <person name="Banta L."/>
            <person name="Dickerman A.W."/>
            <person name="Paulsen I."/>
            <person name="Otten L."/>
            <person name="Suen G."/>
            <person name="Welch R."/>
            <person name="Almeida N.F."/>
            <person name="Arnold F."/>
            <person name="Burton O.T."/>
            <person name="Du Z."/>
            <person name="Ewing A."/>
            <person name="Godsy E."/>
            <person name="Heisel S."/>
            <person name="Houmiel K.L."/>
            <person name="Jhaveri J."/>
            <person name="Lu J."/>
            <person name="Miller N.M."/>
            <person name="Norton S."/>
            <person name="Chen Q."/>
            <person name="Phoolcharoen W."/>
            <person name="Ohlin V."/>
            <person name="Ondrusek D."/>
            <person name="Pride N."/>
            <person name="Stricklin S.L."/>
            <person name="Sun J."/>
            <person name="Wheeler C."/>
            <person name="Wilson L."/>
            <person name="Zhu H."/>
            <person name="Wood D.W."/>
        </authorList>
    </citation>
    <scope>NUCLEOTIDE SEQUENCE [LARGE SCALE GENOMIC DNA]</scope>
    <source>
        <strain>ATCC BAA-846 / DSM 112012 / S4</strain>
    </source>
</reference>
<dbReference type="EC" id="2.7.1.33" evidence="1"/>
<dbReference type="EMBL" id="CP000633">
    <property type="protein sequence ID" value="ACM35001.1"/>
    <property type="molecule type" value="Genomic_DNA"/>
</dbReference>
<dbReference type="RefSeq" id="WP_012654531.1">
    <property type="nucleotide sequence ID" value="NC_011989.1"/>
</dbReference>
<dbReference type="SMR" id="B9JXX1"/>
<dbReference type="STRING" id="311402.Avi_0039"/>
<dbReference type="KEGG" id="avi:Avi_0039"/>
<dbReference type="eggNOG" id="COG1072">
    <property type="taxonomic scope" value="Bacteria"/>
</dbReference>
<dbReference type="HOGENOM" id="CLU_053818_1_1_5"/>
<dbReference type="UniPathway" id="UPA00241">
    <property type="reaction ID" value="UER00352"/>
</dbReference>
<dbReference type="Proteomes" id="UP000001596">
    <property type="component" value="Chromosome 1"/>
</dbReference>
<dbReference type="GO" id="GO:0005737">
    <property type="term" value="C:cytoplasm"/>
    <property type="evidence" value="ECO:0007669"/>
    <property type="project" value="UniProtKB-SubCell"/>
</dbReference>
<dbReference type="GO" id="GO:0005524">
    <property type="term" value="F:ATP binding"/>
    <property type="evidence" value="ECO:0007669"/>
    <property type="project" value="UniProtKB-UniRule"/>
</dbReference>
<dbReference type="GO" id="GO:0004594">
    <property type="term" value="F:pantothenate kinase activity"/>
    <property type="evidence" value="ECO:0007669"/>
    <property type="project" value="UniProtKB-UniRule"/>
</dbReference>
<dbReference type="GO" id="GO:0015937">
    <property type="term" value="P:coenzyme A biosynthetic process"/>
    <property type="evidence" value="ECO:0007669"/>
    <property type="project" value="UniProtKB-UniRule"/>
</dbReference>
<dbReference type="CDD" id="cd02025">
    <property type="entry name" value="PanK"/>
    <property type="match status" value="1"/>
</dbReference>
<dbReference type="Gene3D" id="3.40.50.300">
    <property type="entry name" value="P-loop containing nucleotide triphosphate hydrolases"/>
    <property type="match status" value="1"/>
</dbReference>
<dbReference type="HAMAP" id="MF_00215">
    <property type="entry name" value="Pantothen_kinase_1"/>
    <property type="match status" value="1"/>
</dbReference>
<dbReference type="InterPro" id="IPR027417">
    <property type="entry name" value="P-loop_NTPase"/>
</dbReference>
<dbReference type="InterPro" id="IPR004566">
    <property type="entry name" value="PanK"/>
</dbReference>
<dbReference type="InterPro" id="IPR006083">
    <property type="entry name" value="PRK/URK"/>
</dbReference>
<dbReference type="NCBIfam" id="TIGR00554">
    <property type="entry name" value="panK_bact"/>
    <property type="match status" value="1"/>
</dbReference>
<dbReference type="PANTHER" id="PTHR10285">
    <property type="entry name" value="URIDINE KINASE"/>
    <property type="match status" value="1"/>
</dbReference>
<dbReference type="Pfam" id="PF00485">
    <property type="entry name" value="PRK"/>
    <property type="match status" value="1"/>
</dbReference>
<dbReference type="PIRSF" id="PIRSF000545">
    <property type="entry name" value="Pantothenate_kin"/>
    <property type="match status" value="1"/>
</dbReference>
<dbReference type="SUPFAM" id="SSF52540">
    <property type="entry name" value="P-loop containing nucleoside triphosphate hydrolases"/>
    <property type="match status" value="1"/>
</dbReference>
<gene>
    <name evidence="1" type="primary">coaA</name>
    <name type="ordered locus">Avi_0039</name>
</gene>
<feature type="chain" id="PRO_1000124793" description="Pantothenate kinase">
    <location>
        <begin position="1"/>
        <end position="330"/>
    </location>
</feature>
<feature type="binding site" evidence="1">
    <location>
        <begin position="108"/>
        <end position="115"/>
    </location>
    <ligand>
        <name>ATP</name>
        <dbReference type="ChEBI" id="CHEBI:30616"/>
    </ligand>
</feature>
<proteinExistence type="inferred from homology"/>
<name>COAA_ALLAM</name>
<keyword id="KW-0067">ATP-binding</keyword>
<keyword id="KW-0173">Coenzyme A biosynthesis</keyword>
<keyword id="KW-0963">Cytoplasm</keyword>
<keyword id="KW-0418">Kinase</keyword>
<keyword id="KW-0547">Nucleotide-binding</keyword>
<keyword id="KW-1185">Reference proteome</keyword>
<keyword id="KW-0808">Transferase</keyword>
<evidence type="ECO:0000255" key="1">
    <source>
        <dbReference type="HAMAP-Rule" id="MF_00215"/>
    </source>
</evidence>
<sequence length="330" mass="37897">MTTAIRQAEGEEALDHFQVGSYSPYLFFSSEEWARFRADTPLTLTLDEVHRLRSIDDPIDLAEVRRIYLALSRLLSSHVESSQLLFEQRNRFLSTNVTKTPFIIGIAGSVAVGKSTTARVLKELLARWPSSPKVDLVTTDGFLYSNATLVRDNKLNRKGFPESYDTAALLRFLSAIKAGQQNVKAPRYSHLTYDVLPDQHTIIDRPDILIFEGINVLQSRDLPRDGKIVPMVSDFFDFSIYIDAEESLIHNWYVKRFMKLRQTAFRDPNSYFHRYATISEDEASTIAENLWSHINLINLRDNIQPTRPRADLILRKGENHLVEQVALRKL</sequence>
<accession>B9JXX1</accession>
<protein>
    <recommendedName>
        <fullName evidence="1">Pantothenate kinase</fullName>
        <ecNumber evidence="1">2.7.1.33</ecNumber>
    </recommendedName>
    <alternativeName>
        <fullName evidence="1">Pantothenic acid kinase</fullName>
    </alternativeName>
</protein>
<comment type="catalytic activity">
    <reaction evidence="1">
        <text>(R)-pantothenate + ATP = (R)-4'-phosphopantothenate + ADP + H(+)</text>
        <dbReference type="Rhea" id="RHEA:16373"/>
        <dbReference type="ChEBI" id="CHEBI:10986"/>
        <dbReference type="ChEBI" id="CHEBI:15378"/>
        <dbReference type="ChEBI" id="CHEBI:29032"/>
        <dbReference type="ChEBI" id="CHEBI:30616"/>
        <dbReference type="ChEBI" id="CHEBI:456216"/>
        <dbReference type="EC" id="2.7.1.33"/>
    </reaction>
</comment>
<comment type="pathway">
    <text evidence="1">Cofactor biosynthesis; coenzyme A biosynthesis; CoA from (R)-pantothenate: step 1/5.</text>
</comment>
<comment type="subcellular location">
    <subcellularLocation>
        <location evidence="1">Cytoplasm</location>
    </subcellularLocation>
</comment>
<comment type="similarity">
    <text evidence="1">Belongs to the prokaryotic pantothenate kinase family.</text>
</comment>
<organism>
    <name type="scientific">Allorhizobium ampelinum (strain ATCC BAA-846 / DSM 112012 / S4)</name>
    <name type="common">Agrobacterium vitis (strain S4)</name>
    <dbReference type="NCBI Taxonomy" id="311402"/>
    <lineage>
        <taxon>Bacteria</taxon>
        <taxon>Pseudomonadati</taxon>
        <taxon>Pseudomonadota</taxon>
        <taxon>Alphaproteobacteria</taxon>
        <taxon>Hyphomicrobiales</taxon>
        <taxon>Rhizobiaceae</taxon>
        <taxon>Rhizobium/Agrobacterium group</taxon>
        <taxon>Allorhizobium</taxon>
        <taxon>Allorhizobium ampelinum</taxon>
    </lineage>
</organism>